<keyword id="KW-0238">DNA-binding</keyword>
<keyword id="KW-0479">Metal-binding</keyword>
<keyword id="KW-0539">Nucleus</keyword>
<keyword id="KW-1185">Reference proteome</keyword>
<keyword id="KW-0804">Transcription</keyword>
<keyword id="KW-0805">Transcription regulation</keyword>
<keyword id="KW-0862">Zinc</keyword>
<dbReference type="EMBL" id="KV878984">
    <property type="protein sequence ID" value="OJJ97037.1"/>
    <property type="molecule type" value="Genomic_DNA"/>
</dbReference>
<dbReference type="RefSeq" id="XP_020053377.1">
    <property type="nucleotide sequence ID" value="XM_020198592.1"/>
</dbReference>
<dbReference type="SMR" id="A0A1L9WLK2"/>
<dbReference type="GeneID" id="30972406"/>
<dbReference type="VEuPathDB" id="FungiDB:ASPACDRAFT_1890825"/>
<dbReference type="OMA" id="ACARCIE"/>
<dbReference type="OrthoDB" id="2943660at2759"/>
<dbReference type="Proteomes" id="UP000184546">
    <property type="component" value="Unassembled WGS sequence"/>
</dbReference>
<dbReference type="GO" id="GO:0005634">
    <property type="term" value="C:nucleus"/>
    <property type="evidence" value="ECO:0007669"/>
    <property type="project" value="UniProtKB-SubCell"/>
</dbReference>
<dbReference type="GO" id="GO:0003677">
    <property type="term" value="F:DNA binding"/>
    <property type="evidence" value="ECO:0007669"/>
    <property type="project" value="UniProtKB-KW"/>
</dbReference>
<dbReference type="GO" id="GO:0000981">
    <property type="term" value="F:DNA-binding transcription factor activity, RNA polymerase II-specific"/>
    <property type="evidence" value="ECO:0007669"/>
    <property type="project" value="InterPro"/>
</dbReference>
<dbReference type="GO" id="GO:0008270">
    <property type="term" value="F:zinc ion binding"/>
    <property type="evidence" value="ECO:0007669"/>
    <property type="project" value="InterPro"/>
</dbReference>
<dbReference type="GO" id="GO:0045122">
    <property type="term" value="P:aflatoxin biosynthetic process"/>
    <property type="evidence" value="ECO:0007669"/>
    <property type="project" value="InterPro"/>
</dbReference>
<dbReference type="GO" id="GO:0009893">
    <property type="term" value="P:positive regulation of metabolic process"/>
    <property type="evidence" value="ECO:0007669"/>
    <property type="project" value="UniProtKB-ARBA"/>
</dbReference>
<dbReference type="CDD" id="cd00067">
    <property type="entry name" value="GAL4"/>
    <property type="match status" value="1"/>
</dbReference>
<dbReference type="Gene3D" id="4.10.240.10">
    <property type="entry name" value="Zn(2)-C6 fungal-type DNA-binding domain"/>
    <property type="match status" value="1"/>
</dbReference>
<dbReference type="InterPro" id="IPR013700">
    <property type="entry name" value="AflR"/>
</dbReference>
<dbReference type="InterPro" id="IPR036864">
    <property type="entry name" value="Zn2-C6_fun-type_DNA-bd_sf"/>
</dbReference>
<dbReference type="InterPro" id="IPR001138">
    <property type="entry name" value="Zn2Cys6_DnaBD"/>
</dbReference>
<dbReference type="PANTHER" id="PTHR47660:SF2">
    <property type="entry name" value="TRANSCRIPTION FACTOR WITH C2H2 AND ZN(2)-CYS(6) DNA BINDING DOMAIN (EUROFUNG)"/>
    <property type="match status" value="1"/>
</dbReference>
<dbReference type="PANTHER" id="PTHR47660">
    <property type="entry name" value="TRANSCRIPTION FACTOR WITH C2H2 AND ZN(2)-CYS(6) DNA BINDING DOMAIN (EUROFUNG)-RELATED-RELATED"/>
    <property type="match status" value="1"/>
</dbReference>
<dbReference type="Pfam" id="PF08493">
    <property type="entry name" value="AflR"/>
    <property type="match status" value="1"/>
</dbReference>
<dbReference type="Pfam" id="PF00172">
    <property type="entry name" value="Zn_clus"/>
    <property type="match status" value="1"/>
</dbReference>
<dbReference type="PRINTS" id="PR00755">
    <property type="entry name" value="AFLATOXINBRP"/>
</dbReference>
<dbReference type="SMART" id="SM00066">
    <property type="entry name" value="GAL4"/>
    <property type="match status" value="1"/>
</dbReference>
<dbReference type="SUPFAM" id="SSF57701">
    <property type="entry name" value="Zn2/Cys6 DNA-binding domain"/>
    <property type="match status" value="1"/>
</dbReference>
<dbReference type="PROSITE" id="PS00463">
    <property type="entry name" value="ZN2_CY6_FUNGAL_1"/>
    <property type="match status" value="1"/>
</dbReference>
<dbReference type="PROSITE" id="PS50048">
    <property type="entry name" value="ZN2_CY6_FUNGAL_2"/>
    <property type="match status" value="1"/>
</dbReference>
<feature type="chain" id="PRO_0000453506" description="Transcriptional regulator AacuR">
    <location>
        <begin position="1"/>
        <end position="363"/>
    </location>
</feature>
<feature type="DNA-binding region" description="Zn(2)-C6 fungal-type" evidence="1">
    <location>
        <begin position="27"/>
        <end position="54"/>
    </location>
</feature>
<feature type="region of interest" description="Disordered" evidence="2">
    <location>
        <begin position="1"/>
        <end position="24"/>
    </location>
</feature>
<feature type="region of interest" description="Disordered" evidence="2">
    <location>
        <begin position="63"/>
        <end position="104"/>
    </location>
</feature>
<feature type="compositionally biased region" description="Basic residues" evidence="2">
    <location>
        <begin position="63"/>
        <end position="72"/>
    </location>
</feature>
<feature type="compositionally biased region" description="Low complexity" evidence="2">
    <location>
        <begin position="76"/>
        <end position="102"/>
    </location>
</feature>
<organism>
    <name type="scientific">Aspergillus aculeatus (strain ATCC 16872 / CBS 172.66 / WB 5094)</name>
    <dbReference type="NCBI Taxonomy" id="690307"/>
    <lineage>
        <taxon>Eukaryota</taxon>
        <taxon>Fungi</taxon>
        <taxon>Dikarya</taxon>
        <taxon>Ascomycota</taxon>
        <taxon>Pezizomycotina</taxon>
        <taxon>Eurotiomycetes</taxon>
        <taxon>Eurotiomycetidae</taxon>
        <taxon>Eurotiales</taxon>
        <taxon>Aspergillaceae</taxon>
        <taxon>Aspergillus</taxon>
        <taxon>Aspergillus subgen. Circumdati</taxon>
    </lineage>
</organism>
<comment type="function">
    <text evidence="6 8">Transcriptional regulator; part of the gene cluster that mediates the biosynthesis of the tetrahydroxanthone dimer secalonic acid D.</text>
</comment>
<comment type="subcellular location">
    <subcellularLocation>
        <location evidence="1">Nucleus</location>
    </subcellularLocation>
</comment>
<comment type="biotechnology">
    <text evidence="3 4 5 7">Secalonic acids show unprecedented anticancer activities against various human cancer cells and might be interesting for further derivatization, targeting diseases such as cancer.</text>
</comment>
<evidence type="ECO:0000255" key="1">
    <source>
        <dbReference type="PROSITE-ProRule" id="PRU00227"/>
    </source>
</evidence>
<evidence type="ECO:0000256" key="2">
    <source>
        <dbReference type="SAM" id="MobiDB-lite"/>
    </source>
</evidence>
<evidence type="ECO:0000269" key="3">
    <source>
    </source>
</evidence>
<evidence type="ECO:0000269" key="4">
    <source>
    </source>
</evidence>
<evidence type="ECO:0000269" key="5">
    <source>
    </source>
</evidence>
<evidence type="ECO:0000269" key="6">
    <source>
    </source>
</evidence>
<evidence type="ECO:0000269" key="7">
    <source>
    </source>
</evidence>
<evidence type="ECO:0000269" key="8">
    <source>
    </source>
</evidence>
<evidence type="ECO:0000303" key="9">
    <source>
    </source>
</evidence>
<sequence>MTSLQCPPPDRTRRSLSPTGPKFRESCKSCAASKIRCTKEKPQCARCVKRNMVCEYLESKRARRKPGARLKHRESITTNAHHSPTTTTITTSRTTSSSPSASPKTYHPLNYVDILSWTPTPTLPDSATDTQTGLHCNFDDFLAFSHSTSLLGVPEAGELPVHLTTDFRQLEELNRAPEALDEILQCRCSEDGYQLAILSVVILKVLGWYATIIRPLLGVEAHSPGVGEGTTVRTDSLAETQLSSSFYVDSGQQISPKITMGPPLAYGRESEGKTRMAAQLILSQLHRVQRLVNILCHRFKLHSNREQNPAWNSSTASTATEPEGPAYIEHLYPFSSLVFDQIEKDVRGRLRSLSTELLEMLRY</sequence>
<accession>A0A1L9WLK2</accession>
<gene>
    <name evidence="9" type="primary">AacuR</name>
    <name type="ORF">ASPACDRAFT_1890825</name>
</gene>
<reference key="1">
    <citation type="journal article" date="2017" name="Genome Biol.">
        <title>Comparative genomics reveals high biological diversity and specific adaptations in the industrially and medically important fungal genus Aspergillus.</title>
        <authorList>
            <person name="de Vries R.P."/>
            <person name="Riley R."/>
            <person name="Wiebenga A."/>
            <person name="Aguilar-Osorio G."/>
            <person name="Amillis S."/>
            <person name="Uchima C.A."/>
            <person name="Anderluh G."/>
            <person name="Asadollahi M."/>
            <person name="Askin M."/>
            <person name="Barry K."/>
            <person name="Battaglia E."/>
            <person name="Bayram O."/>
            <person name="Benocci T."/>
            <person name="Braus-Stromeyer S.A."/>
            <person name="Caldana C."/>
            <person name="Canovas D."/>
            <person name="Cerqueira G.C."/>
            <person name="Chen F."/>
            <person name="Chen W."/>
            <person name="Choi C."/>
            <person name="Clum A."/>
            <person name="Dos Santos R.A."/>
            <person name="Damasio A.R."/>
            <person name="Diallinas G."/>
            <person name="Emri T."/>
            <person name="Fekete E."/>
            <person name="Flipphi M."/>
            <person name="Freyberg S."/>
            <person name="Gallo A."/>
            <person name="Gournas C."/>
            <person name="Habgood R."/>
            <person name="Hainaut M."/>
            <person name="Harispe M.L."/>
            <person name="Henrissat B."/>
            <person name="Hilden K.S."/>
            <person name="Hope R."/>
            <person name="Hossain A."/>
            <person name="Karabika E."/>
            <person name="Karaffa L."/>
            <person name="Karanyi Z."/>
            <person name="Krasevec N."/>
            <person name="Kuo A."/>
            <person name="Kusch H."/>
            <person name="LaButti K."/>
            <person name="Lagendijk E.L."/>
            <person name="Lapidus A."/>
            <person name="Levasseur A."/>
            <person name="Lindquist E."/>
            <person name="Lipzen A."/>
            <person name="Logrieco A.F."/>
            <person name="MacCabe A."/>
            <person name="Maekelae M.R."/>
            <person name="Malavazi I."/>
            <person name="Melin P."/>
            <person name="Meyer V."/>
            <person name="Mielnichuk N."/>
            <person name="Miskei M."/>
            <person name="Molnar A.P."/>
            <person name="Mule G."/>
            <person name="Ngan C.Y."/>
            <person name="Orejas M."/>
            <person name="Orosz E."/>
            <person name="Ouedraogo J.P."/>
            <person name="Overkamp K.M."/>
            <person name="Park H.-S."/>
            <person name="Perrone G."/>
            <person name="Piumi F."/>
            <person name="Punt P.J."/>
            <person name="Ram A.F."/>
            <person name="Ramon A."/>
            <person name="Rauscher S."/>
            <person name="Record E."/>
            <person name="Riano-Pachon D.M."/>
            <person name="Robert V."/>
            <person name="Roehrig J."/>
            <person name="Ruller R."/>
            <person name="Salamov A."/>
            <person name="Salih N.S."/>
            <person name="Samson R.A."/>
            <person name="Sandor E."/>
            <person name="Sanguinetti M."/>
            <person name="Schuetze T."/>
            <person name="Sepcic K."/>
            <person name="Shelest E."/>
            <person name="Sherlock G."/>
            <person name="Sophianopoulou V."/>
            <person name="Squina F.M."/>
            <person name="Sun H."/>
            <person name="Susca A."/>
            <person name="Todd R.B."/>
            <person name="Tsang A."/>
            <person name="Unkles S.E."/>
            <person name="van de Wiele N."/>
            <person name="van Rossen-Uffink D."/>
            <person name="Oliveira J.V."/>
            <person name="Vesth T.C."/>
            <person name="Visser J."/>
            <person name="Yu J.-H."/>
            <person name="Zhou M."/>
            <person name="Andersen M.R."/>
            <person name="Archer D.B."/>
            <person name="Baker S.E."/>
            <person name="Benoit I."/>
            <person name="Brakhage A.A."/>
            <person name="Braus G.H."/>
            <person name="Fischer R."/>
            <person name="Frisvad J.C."/>
            <person name="Goldman G.H."/>
            <person name="Houbraken J."/>
            <person name="Oakley B."/>
            <person name="Pocsi I."/>
            <person name="Scazzocchio C."/>
            <person name="Seiboth B."/>
            <person name="vanKuyk P.A."/>
            <person name="Wortman J."/>
            <person name="Dyer P.S."/>
            <person name="Grigoriev I.V."/>
        </authorList>
    </citation>
    <scope>NUCLEOTIDE SEQUENCE [LARGE SCALE GENOMIC DNA]</scope>
    <source>
        <strain>ATCC 16872 / CBS 172.66 / WB 5094</strain>
    </source>
</reference>
<reference key="2">
    <citation type="journal article" date="2017" name="Neoplasma">
        <title>Secalonic acid- F inhibited cell growth more effectively than 5-fluorouracil on hepatocellular carcinoma in vitro and in vivo.</title>
        <authorList>
            <person name="Gao X."/>
            <person name="Sun H.L."/>
            <person name="Liu D.S."/>
            <person name="Zhang J.R."/>
            <person name="Zhang J."/>
            <person name="Yan M.M."/>
            <person name="Pan X.H."/>
        </authorList>
    </citation>
    <scope>BIOTECHNOLOGY</scope>
</reference>
<reference key="3">
    <citation type="journal article" date="2018" name="Curr. Microbiol.">
        <title>Secondary Metabolites and Their Biological Activity from Aspergillus aculeatus KKU-CT2.</title>
        <authorList>
            <person name="Yodsing N."/>
            <person name="Lekphrom R."/>
            <person name="Sangsopha W."/>
            <person name="Aimi T."/>
            <person name="Boonlue S."/>
        </authorList>
    </citation>
    <scope>BIOTECHNOLOGY</scope>
</reference>
<reference key="4">
    <citation type="journal article" date="2019" name="Chem. Sci.">
        <title>Structure revision of cryptosporioptides and determination of the genetic basis for dimeric xanthone biosynthesis in fungi.</title>
        <authorList>
            <person name="Greco C."/>
            <person name="de Mattos-Shipley K."/>
            <person name="Bailey A.M."/>
            <person name="Mulholland N.P."/>
            <person name="Vincent J.L."/>
            <person name="Willis C.L."/>
            <person name="Cox R.J."/>
            <person name="Simpson T.J."/>
        </authorList>
    </citation>
    <scope>IDENTIFICATION</scope>
    <scope>FUNCTION</scope>
</reference>
<reference key="5">
    <citation type="journal article" date="2019" name="Molecules">
        <title>Secalonic Acid-F, a Novel Mycotoxin, Represses the Progression of Hepatocellular Carcinoma via MARCH1 Regulation of the PI3K/AKT/beta-catenin Signaling Pathway.</title>
        <authorList>
            <person name="Xie L."/>
            <person name="Li M."/>
            <person name="Liu D."/>
            <person name="Wang X."/>
            <person name="Wang P."/>
            <person name="Dai H."/>
            <person name="Yang W."/>
            <person name="Liu W."/>
            <person name="Hu X."/>
            <person name="Zhao M."/>
        </authorList>
    </citation>
    <scope>BIOTECHNOLOGY</scope>
</reference>
<reference key="6">
    <citation type="journal article" date="2020" name="ACS Omega">
        <title>Discovery of a Secalonic Acid Derivative from Aspergillus aculeatus, an Endophyte of Rosa damascena Mill., Triggers Apoptosis in MDA-MB-231 Triple Negative Breast Cancer Cells.</title>
        <authorList>
            <person name="Farooq S."/>
            <person name="Qayum A."/>
            <person name="Nalli Y."/>
            <person name="Lauro G."/>
            <person name="Chini M.G."/>
            <person name="Bifulco G."/>
            <person name="Chaubey A."/>
            <person name="Singh S.K."/>
            <person name="Riyaz-Ul-Hassan S."/>
            <person name="Ali A."/>
        </authorList>
    </citation>
    <scope>BIOTECHNOLOGY</scope>
</reference>
<reference key="7">
    <citation type="journal article" date="2021" name="J. Nat. Prod.">
        <title>Heterologous biosynthesis of tetrahydroxanthone dimers: determination of key factors for selective or divergent synthesis.</title>
        <authorList>
            <person name="Wei X."/>
            <person name="Chen X."/>
            <person name="Chen L."/>
            <person name="Yan D."/>
            <person name="Wang W.G."/>
            <person name="Matsuda Y."/>
        </authorList>
    </citation>
    <scope>FUNCTION</scope>
</reference>
<protein>
    <recommendedName>
        <fullName evidence="9">Transcriptional regulator AacuR</fullName>
    </recommendedName>
    <alternativeName>
        <fullName evidence="9">Secalonic acid cluster protein R</fullName>
    </alternativeName>
</protein>
<name>AACUR_ASPA1</name>
<proteinExistence type="evidence at protein level"/>